<organism>
    <name type="scientific">Clostridium botulinum (strain Kyoto / Type A2)</name>
    <dbReference type="NCBI Taxonomy" id="536232"/>
    <lineage>
        <taxon>Bacteria</taxon>
        <taxon>Bacillati</taxon>
        <taxon>Bacillota</taxon>
        <taxon>Clostridia</taxon>
        <taxon>Eubacteriales</taxon>
        <taxon>Clostridiaceae</taxon>
        <taxon>Clostridium</taxon>
    </lineage>
</organism>
<evidence type="ECO:0000255" key="1">
    <source>
        <dbReference type="HAMAP-Rule" id="MF_01631"/>
    </source>
</evidence>
<comment type="function">
    <text evidence="1">Catalyzes the last two sequential reactions in the de novo biosynthetic pathway for UDP-N-acetylglucosamine (UDP-GlcNAc). The C-terminal domain catalyzes the transfer of acetyl group from acetyl coenzyme A to glucosamine-1-phosphate (GlcN-1-P) to produce N-acetylglucosamine-1-phosphate (GlcNAc-1-P), which is converted into UDP-GlcNAc by the transfer of uridine 5-monophosphate (from uridine 5-triphosphate), a reaction catalyzed by the N-terminal domain.</text>
</comment>
<comment type="catalytic activity">
    <reaction evidence="1">
        <text>alpha-D-glucosamine 1-phosphate + acetyl-CoA = N-acetyl-alpha-D-glucosamine 1-phosphate + CoA + H(+)</text>
        <dbReference type="Rhea" id="RHEA:13725"/>
        <dbReference type="ChEBI" id="CHEBI:15378"/>
        <dbReference type="ChEBI" id="CHEBI:57287"/>
        <dbReference type="ChEBI" id="CHEBI:57288"/>
        <dbReference type="ChEBI" id="CHEBI:57776"/>
        <dbReference type="ChEBI" id="CHEBI:58516"/>
        <dbReference type="EC" id="2.3.1.157"/>
    </reaction>
</comment>
<comment type="catalytic activity">
    <reaction evidence="1">
        <text>N-acetyl-alpha-D-glucosamine 1-phosphate + UTP + H(+) = UDP-N-acetyl-alpha-D-glucosamine + diphosphate</text>
        <dbReference type="Rhea" id="RHEA:13509"/>
        <dbReference type="ChEBI" id="CHEBI:15378"/>
        <dbReference type="ChEBI" id="CHEBI:33019"/>
        <dbReference type="ChEBI" id="CHEBI:46398"/>
        <dbReference type="ChEBI" id="CHEBI:57705"/>
        <dbReference type="ChEBI" id="CHEBI:57776"/>
        <dbReference type="EC" id="2.7.7.23"/>
    </reaction>
</comment>
<comment type="cofactor">
    <cofactor evidence="1">
        <name>Mg(2+)</name>
        <dbReference type="ChEBI" id="CHEBI:18420"/>
    </cofactor>
    <text evidence="1">Binds 1 Mg(2+) ion per subunit.</text>
</comment>
<comment type="pathway">
    <text evidence="1">Nucleotide-sugar biosynthesis; UDP-N-acetyl-alpha-D-glucosamine biosynthesis; N-acetyl-alpha-D-glucosamine 1-phosphate from alpha-D-glucosamine 6-phosphate (route II): step 2/2.</text>
</comment>
<comment type="pathway">
    <text evidence="1">Nucleotide-sugar biosynthesis; UDP-N-acetyl-alpha-D-glucosamine biosynthesis; UDP-N-acetyl-alpha-D-glucosamine from N-acetyl-alpha-D-glucosamine 1-phosphate: step 1/1.</text>
</comment>
<comment type="pathway">
    <text evidence="1">Bacterial outer membrane biogenesis; LPS lipid A biosynthesis.</text>
</comment>
<comment type="subunit">
    <text evidence="1">Homotrimer.</text>
</comment>
<comment type="subcellular location">
    <subcellularLocation>
        <location evidence="1">Cytoplasm</location>
    </subcellularLocation>
</comment>
<comment type="similarity">
    <text evidence="1">In the N-terminal section; belongs to the N-acetylglucosamine-1-phosphate uridyltransferase family.</text>
</comment>
<comment type="similarity">
    <text evidence="1">In the C-terminal section; belongs to the transferase hexapeptide repeat family.</text>
</comment>
<reference key="1">
    <citation type="submission" date="2008-10" db="EMBL/GenBank/DDBJ databases">
        <title>Genome sequence of Clostridium botulinum A2 Kyoto.</title>
        <authorList>
            <person name="Shrivastava S."/>
            <person name="Brinkac L.M."/>
            <person name="Brown J.L."/>
            <person name="Bruce D."/>
            <person name="Detter C.C."/>
            <person name="Johnson E.A."/>
            <person name="Munk C.A."/>
            <person name="Smith L.A."/>
            <person name="Smith T.J."/>
            <person name="Sutton G."/>
            <person name="Brettin T.S."/>
        </authorList>
    </citation>
    <scope>NUCLEOTIDE SEQUENCE [LARGE SCALE GENOMIC DNA]</scope>
    <source>
        <strain>Kyoto / Type A2</strain>
    </source>
</reference>
<accession>C1FNF1</accession>
<proteinExistence type="inferred from homology"/>
<feature type="chain" id="PRO_1000186426" description="Bifunctional protein GlmU">
    <location>
        <begin position="1"/>
        <end position="457"/>
    </location>
</feature>
<feature type="region of interest" description="Pyrophosphorylase" evidence="1">
    <location>
        <begin position="1"/>
        <end position="229"/>
    </location>
</feature>
<feature type="region of interest" description="Linker" evidence="1">
    <location>
        <begin position="230"/>
        <end position="250"/>
    </location>
</feature>
<feature type="region of interest" description="N-acetyltransferase" evidence="1">
    <location>
        <begin position="251"/>
        <end position="457"/>
    </location>
</feature>
<feature type="active site" description="Proton acceptor" evidence="1">
    <location>
        <position position="362"/>
    </location>
</feature>
<feature type="binding site" evidence="1">
    <location>
        <begin position="8"/>
        <end position="11"/>
    </location>
    <ligand>
        <name>UDP-N-acetyl-alpha-D-glucosamine</name>
        <dbReference type="ChEBI" id="CHEBI:57705"/>
    </ligand>
</feature>
<feature type="binding site" evidence="1">
    <location>
        <position position="22"/>
    </location>
    <ligand>
        <name>UDP-N-acetyl-alpha-D-glucosamine</name>
        <dbReference type="ChEBI" id="CHEBI:57705"/>
    </ligand>
</feature>
<feature type="binding site" evidence="1">
    <location>
        <position position="73"/>
    </location>
    <ligand>
        <name>UDP-N-acetyl-alpha-D-glucosamine</name>
        <dbReference type="ChEBI" id="CHEBI:57705"/>
    </ligand>
</feature>
<feature type="binding site" evidence="1">
    <location>
        <begin position="78"/>
        <end position="79"/>
    </location>
    <ligand>
        <name>UDP-N-acetyl-alpha-D-glucosamine</name>
        <dbReference type="ChEBI" id="CHEBI:57705"/>
    </ligand>
</feature>
<feature type="binding site" evidence="1">
    <location>
        <position position="103"/>
    </location>
    <ligand>
        <name>Mg(2+)</name>
        <dbReference type="ChEBI" id="CHEBI:18420"/>
    </ligand>
</feature>
<feature type="binding site" evidence="1">
    <location>
        <position position="140"/>
    </location>
    <ligand>
        <name>UDP-N-acetyl-alpha-D-glucosamine</name>
        <dbReference type="ChEBI" id="CHEBI:57705"/>
    </ligand>
</feature>
<feature type="binding site" evidence="1">
    <location>
        <position position="155"/>
    </location>
    <ligand>
        <name>UDP-N-acetyl-alpha-D-glucosamine</name>
        <dbReference type="ChEBI" id="CHEBI:57705"/>
    </ligand>
</feature>
<feature type="binding site" evidence="1">
    <location>
        <position position="170"/>
    </location>
    <ligand>
        <name>UDP-N-acetyl-alpha-D-glucosamine</name>
        <dbReference type="ChEBI" id="CHEBI:57705"/>
    </ligand>
</feature>
<feature type="binding site" evidence="1">
    <location>
        <position position="227"/>
    </location>
    <ligand>
        <name>Mg(2+)</name>
        <dbReference type="ChEBI" id="CHEBI:18420"/>
    </ligand>
</feature>
<feature type="binding site" evidence="1">
    <location>
        <position position="227"/>
    </location>
    <ligand>
        <name>UDP-N-acetyl-alpha-D-glucosamine</name>
        <dbReference type="ChEBI" id="CHEBI:57705"/>
    </ligand>
</feature>
<feature type="binding site" evidence="1">
    <location>
        <position position="332"/>
    </location>
    <ligand>
        <name>UDP-N-acetyl-alpha-D-glucosamine</name>
        <dbReference type="ChEBI" id="CHEBI:57705"/>
    </ligand>
</feature>
<feature type="binding site" evidence="1">
    <location>
        <position position="350"/>
    </location>
    <ligand>
        <name>UDP-N-acetyl-alpha-D-glucosamine</name>
        <dbReference type="ChEBI" id="CHEBI:57705"/>
    </ligand>
</feature>
<feature type="binding site" evidence="1">
    <location>
        <position position="365"/>
    </location>
    <ligand>
        <name>UDP-N-acetyl-alpha-D-glucosamine</name>
        <dbReference type="ChEBI" id="CHEBI:57705"/>
    </ligand>
</feature>
<feature type="binding site" evidence="1">
    <location>
        <position position="376"/>
    </location>
    <ligand>
        <name>UDP-N-acetyl-alpha-D-glucosamine</name>
        <dbReference type="ChEBI" id="CHEBI:57705"/>
    </ligand>
</feature>
<feature type="binding site" evidence="1">
    <location>
        <begin position="385"/>
        <end position="386"/>
    </location>
    <ligand>
        <name>acetyl-CoA</name>
        <dbReference type="ChEBI" id="CHEBI:57288"/>
    </ligand>
</feature>
<feature type="binding site" evidence="1">
    <location>
        <position position="422"/>
    </location>
    <ligand>
        <name>acetyl-CoA</name>
        <dbReference type="ChEBI" id="CHEBI:57288"/>
    </ligand>
</feature>
<feature type="binding site" evidence="1">
    <location>
        <position position="439"/>
    </location>
    <ligand>
        <name>acetyl-CoA</name>
        <dbReference type="ChEBI" id="CHEBI:57288"/>
    </ligand>
</feature>
<keyword id="KW-0012">Acyltransferase</keyword>
<keyword id="KW-0133">Cell shape</keyword>
<keyword id="KW-0961">Cell wall biogenesis/degradation</keyword>
<keyword id="KW-0963">Cytoplasm</keyword>
<keyword id="KW-0460">Magnesium</keyword>
<keyword id="KW-0479">Metal-binding</keyword>
<keyword id="KW-0511">Multifunctional enzyme</keyword>
<keyword id="KW-0548">Nucleotidyltransferase</keyword>
<keyword id="KW-0573">Peptidoglycan synthesis</keyword>
<keyword id="KW-0677">Repeat</keyword>
<keyword id="KW-0808">Transferase</keyword>
<sequence>MYNCAIILAAGKGKRMKSSMPKVVHKVCGKEMVNHVIDNVRKANIKDVNLVIGKGSKTVKEHTKDRNLTYSMQEEQLGTGHAVICAEEFLKDKKGTVAIFTGDAPLITNETIQQLFEFHNSGKYAATLISSTVQDPTGYGRIIREASGEVKKIVEHKDCNEEELKVNEINSGMYCFDIEVLLNSLKNLNNDNSQGEYYLTDVIEITKKSGDKVGAIVVPYEEIMGVNSRVQLSEAEIVMRKRINHKHMVNGVTFIDCESTYIDVDVEIGNDTIIYPGCVIQGNTTIKEECTLYSNSRICNSVIGSGVIVENSVILESHVGEGTTVGPFAYIRPETKIGKSARIGDFVEIKKSTIGDNTKVSHLTYIGDAEVGSKCNFGCGTVVVNYDGQKKQKTIIGNNAFIGCNTNLISPVKVNNNTYIAAGSTITKEVPEGSLAIARSKQINKEGWLDKKGLLKK</sequence>
<protein>
    <recommendedName>
        <fullName evidence="1">Bifunctional protein GlmU</fullName>
    </recommendedName>
    <domain>
        <recommendedName>
            <fullName evidence="1">UDP-N-acetylglucosamine pyrophosphorylase</fullName>
            <ecNumber evidence="1">2.7.7.23</ecNumber>
        </recommendedName>
        <alternativeName>
            <fullName evidence="1">N-acetylglucosamine-1-phosphate uridyltransferase</fullName>
        </alternativeName>
    </domain>
    <domain>
        <recommendedName>
            <fullName evidence="1">Glucosamine-1-phosphate N-acetyltransferase</fullName>
            <ecNumber evidence="1">2.3.1.157</ecNumber>
        </recommendedName>
    </domain>
</protein>
<dbReference type="EC" id="2.7.7.23" evidence="1"/>
<dbReference type="EC" id="2.3.1.157" evidence="1"/>
<dbReference type="EMBL" id="CP001581">
    <property type="protein sequence ID" value="ACO85523.1"/>
    <property type="molecule type" value="Genomic_DNA"/>
</dbReference>
<dbReference type="RefSeq" id="WP_003359392.1">
    <property type="nucleotide sequence ID" value="NC_012563.1"/>
</dbReference>
<dbReference type="SMR" id="C1FNF1"/>
<dbReference type="KEGG" id="cby:CLM_4037"/>
<dbReference type="eggNOG" id="COG1207">
    <property type="taxonomic scope" value="Bacteria"/>
</dbReference>
<dbReference type="HOGENOM" id="CLU_029499_15_2_9"/>
<dbReference type="UniPathway" id="UPA00113">
    <property type="reaction ID" value="UER00532"/>
</dbReference>
<dbReference type="UniPathway" id="UPA00113">
    <property type="reaction ID" value="UER00533"/>
</dbReference>
<dbReference type="UniPathway" id="UPA00973"/>
<dbReference type="Proteomes" id="UP000001374">
    <property type="component" value="Chromosome"/>
</dbReference>
<dbReference type="GO" id="GO:0005737">
    <property type="term" value="C:cytoplasm"/>
    <property type="evidence" value="ECO:0007669"/>
    <property type="project" value="UniProtKB-SubCell"/>
</dbReference>
<dbReference type="GO" id="GO:0016020">
    <property type="term" value="C:membrane"/>
    <property type="evidence" value="ECO:0007669"/>
    <property type="project" value="GOC"/>
</dbReference>
<dbReference type="GO" id="GO:0019134">
    <property type="term" value="F:glucosamine-1-phosphate N-acetyltransferase activity"/>
    <property type="evidence" value="ECO:0007669"/>
    <property type="project" value="UniProtKB-UniRule"/>
</dbReference>
<dbReference type="GO" id="GO:0000287">
    <property type="term" value="F:magnesium ion binding"/>
    <property type="evidence" value="ECO:0007669"/>
    <property type="project" value="UniProtKB-UniRule"/>
</dbReference>
<dbReference type="GO" id="GO:0003977">
    <property type="term" value="F:UDP-N-acetylglucosamine diphosphorylase activity"/>
    <property type="evidence" value="ECO:0007669"/>
    <property type="project" value="UniProtKB-UniRule"/>
</dbReference>
<dbReference type="GO" id="GO:0000902">
    <property type="term" value="P:cell morphogenesis"/>
    <property type="evidence" value="ECO:0007669"/>
    <property type="project" value="UniProtKB-UniRule"/>
</dbReference>
<dbReference type="GO" id="GO:0071555">
    <property type="term" value="P:cell wall organization"/>
    <property type="evidence" value="ECO:0007669"/>
    <property type="project" value="UniProtKB-KW"/>
</dbReference>
<dbReference type="GO" id="GO:0009245">
    <property type="term" value="P:lipid A biosynthetic process"/>
    <property type="evidence" value="ECO:0007669"/>
    <property type="project" value="UniProtKB-UniRule"/>
</dbReference>
<dbReference type="GO" id="GO:0009252">
    <property type="term" value="P:peptidoglycan biosynthetic process"/>
    <property type="evidence" value="ECO:0007669"/>
    <property type="project" value="UniProtKB-UniRule"/>
</dbReference>
<dbReference type="GO" id="GO:0008360">
    <property type="term" value="P:regulation of cell shape"/>
    <property type="evidence" value="ECO:0007669"/>
    <property type="project" value="UniProtKB-KW"/>
</dbReference>
<dbReference type="GO" id="GO:0006048">
    <property type="term" value="P:UDP-N-acetylglucosamine biosynthetic process"/>
    <property type="evidence" value="ECO:0007669"/>
    <property type="project" value="UniProtKB-UniPathway"/>
</dbReference>
<dbReference type="CDD" id="cd02540">
    <property type="entry name" value="GT2_GlmU_N_bac"/>
    <property type="match status" value="1"/>
</dbReference>
<dbReference type="CDD" id="cd03353">
    <property type="entry name" value="LbH_GlmU_C"/>
    <property type="match status" value="1"/>
</dbReference>
<dbReference type="Gene3D" id="2.160.10.10">
    <property type="entry name" value="Hexapeptide repeat proteins"/>
    <property type="match status" value="1"/>
</dbReference>
<dbReference type="Gene3D" id="3.90.550.10">
    <property type="entry name" value="Spore Coat Polysaccharide Biosynthesis Protein SpsA, Chain A"/>
    <property type="match status" value="1"/>
</dbReference>
<dbReference type="HAMAP" id="MF_01631">
    <property type="entry name" value="GlmU"/>
    <property type="match status" value="1"/>
</dbReference>
<dbReference type="InterPro" id="IPR005882">
    <property type="entry name" value="Bifunctional_GlmU"/>
</dbReference>
<dbReference type="InterPro" id="IPR050065">
    <property type="entry name" value="GlmU-like"/>
</dbReference>
<dbReference type="InterPro" id="IPR038009">
    <property type="entry name" value="GlmU_C_LbH"/>
</dbReference>
<dbReference type="InterPro" id="IPR001451">
    <property type="entry name" value="Hexapep"/>
</dbReference>
<dbReference type="InterPro" id="IPR005835">
    <property type="entry name" value="NTP_transferase_dom"/>
</dbReference>
<dbReference type="InterPro" id="IPR029044">
    <property type="entry name" value="Nucleotide-diphossugar_trans"/>
</dbReference>
<dbReference type="InterPro" id="IPR011004">
    <property type="entry name" value="Trimer_LpxA-like_sf"/>
</dbReference>
<dbReference type="NCBIfam" id="TIGR01173">
    <property type="entry name" value="glmU"/>
    <property type="match status" value="1"/>
</dbReference>
<dbReference type="NCBIfam" id="NF010934">
    <property type="entry name" value="PRK14354.1"/>
    <property type="match status" value="1"/>
</dbReference>
<dbReference type="PANTHER" id="PTHR43584:SF3">
    <property type="entry name" value="BIFUNCTIONAL PROTEIN GLMU"/>
    <property type="match status" value="1"/>
</dbReference>
<dbReference type="PANTHER" id="PTHR43584">
    <property type="entry name" value="NUCLEOTIDYL TRANSFERASE"/>
    <property type="match status" value="1"/>
</dbReference>
<dbReference type="Pfam" id="PF00132">
    <property type="entry name" value="Hexapep"/>
    <property type="match status" value="3"/>
</dbReference>
<dbReference type="Pfam" id="PF00483">
    <property type="entry name" value="NTP_transferase"/>
    <property type="match status" value="1"/>
</dbReference>
<dbReference type="SUPFAM" id="SSF53448">
    <property type="entry name" value="Nucleotide-diphospho-sugar transferases"/>
    <property type="match status" value="1"/>
</dbReference>
<dbReference type="SUPFAM" id="SSF51161">
    <property type="entry name" value="Trimeric LpxA-like enzymes"/>
    <property type="match status" value="1"/>
</dbReference>
<name>GLMU_CLOBJ</name>
<gene>
    <name evidence="1" type="primary">glmU</name>
    <name type="ordered locus">CLM_4037</name>
</gene>